<evidence type="ECO:0000250" key="1">
    <source>
        <dbReference type="UniProtKB" id="B8NM67"/>
    </source>
</evidence>
<evidence type="ECO:0000255" key="2"/>
<evidence type="ECO:0000255" key="3">
    <source>
        <dbReference type="PROSITE-ProRule" id="PRU00498"/>
    </source>
</evidence>
<evidence type="ECO:0000256" key="4">
    <source>
        <dbReference type="SAM" id="MobiDB-lite"/>
    </source>
</evidence>
<evidence type="ECO:0000269" key="5">
    <source>
    </source>
</evidence>
<evidence type="ECO:0000269" key="6">
    <source>
    </source>
</evidence>
<evidence type="ECO:0000303" key="7">
    <source>
    </source>
</evidence>
<evidence type="ECO:0000303" key="8">
    <source>
    </source>
</evidence>
<evidence type="ECO:0000305" key="9"/>
<evidence type="ECO:0000305" key="10">
    <source>
    </source>
</evidence>
<dbReference type="EC" id="1.-.-.-" evidence="10"/>
<dbReference type="EMBL" id="KU645833">
    <property type="protein sequence ID" value="AMR44281.1"/>
    <property type="molecule type" value="Genomic_DNA"/>
</dbReference>
<dbReference type="EMBL" id="LC646903">
    <property type="protein sequence ID" value="BDA39141.1"/>
    <property type="molecule type" value="Genomic_DNA"/>
</dbReference>
<dbReference type="GO" id="GO:0016020">
    <property type="term" value="C:membrane"/>
    <property type="evidence" value="ECO:0007669"/>
    <property type="project" value="UniProtKB-SubCell"/>
</dbReference>
<dbReference type="GO" id="GO:0016491">
    <property type="term" value="F:oxidoreductase activity"/>
    <property type="evidence" value="ECO:0007669"/>
    <property type="project" value="UniProtKB-KW"/>
</dbReference>
<dbReference type="GO" id="GO:0043386">
    <property type="term" value="P:mycotoxin biosynthetic process"/>
    <property type="evidence" value="ECO:0007669"/>
    <property type="project" value="InterPro"/>
</dbReference>
<dbReference type="InterPro" id="IPR021765">
    <property type="entry name" value="UstYa-like"/>
</dbReference>
<dbReference type="PANTHER" id="PTHR33365:SF11">
    <property type="entry name" value="TAT PATHWAY SIGNAL SEQUENCE"/>
    <property type="match status" value="1"/>
</dbReference>
<dbReference type="PANTHER" id="PTHR33365">
    <property type="entry name" value="YALI0B05434P"/>
    <property type="match status" value="1"/>
</dbReference>
<dbReference type="Pfam" id="PF11807">
    <property type="entry name" value="UstYa"/>
    <property type="match status" value="1"/>
</dbReference>
<accession>A0A142I729</accession>
<protein>
    <recommendedName>
        <fullName evidence="8">UstYa family oxidase phomYb</fullName>
        <ecNumber evidence="10">1.-.-.-</ecNumber>
    </recommendedName>
    <alternativeName>
        <fullName evidence="8">Phomopsin biosynthesis cluster protein Yb</fullName>
    </alternativeName>
</protein>
<reference key="1">
    <citation type="journal article" date="2016" name="Proc. Natl. Acad. Sci. U.S.A.">
        <title>Biosynthetic investigation of phomopsins reveals a widespread pathway for ribosomal natural products in Ascomycetes.</title>
        <authorList>
            <person name="Ding W."/>
            <person name="Liu W.Q."/>
            <person name="Jia Y."/>
            <person name="Li Y."/>
            <person name="van der Donk W.A."/>
            <person name="Zhang Q."/>
        </authorList>
    </citation>
    <scope>NUCLEOTIDE SEQUENCE [GENOMIC DNA]</scope>
    <scope>FUNCTION</scope>
    <source>
        <strain>ATCC 26115 / IMI 115107 / C 1557</strain>
    </source>
</reference>
<reference key="2">
    <citation type="journal article" date="2021" name="Angew. Chem. Int. Ed.">
        <title>Biosynthetic studies of phomopsins unveil posttranslational installation of dehydroamino acids by ustYa family proteins.</title>
        <authorList>
            <person name="Sogahata K."/>
            <person name="Ozaki T."/>
            <person name="Igarashi Y."/>
            <person name="Naganuma Y."/>
            <person name="Liu C."/>
            <person name="Minami A."/>
            <person name="Oikawa H."/>
        </authorList>
    </citation>
    <scope>NUCLEOTIDE SEQUENCE [GENOMIC DNA]</scope>
    <scope>FUNCTION</scope>
    <scope>DISRUPTION PHENOTYPE</scope>
    <scope>PATHWAY</scope>
    <source>
        <strain>ATCC 26115 / IMI 115107 / C 1557</strain>
    </source>
</reference>
<keyword id="KW-0325">Glycoprotein</keyword>
<keyword id="KW-0472">Membrane</keyword>
<keyword id="KW-0560">Oxidoreductase</keyword>
<keyword id="KW-0812">Transmembrane</keyword>
<keyword id="KW-1133">Transmembrane helix</keyword>
<keyword id="KW-0843">Virulence</keyword>
<sequence>MDGYSSKKPRSASPSRSSLTEVEEEERDTLLKTVSLEEEDKSGENGPRKLRRSRFLYAIGILMLSNIAFIAAFLTVFVQKRALEPARLPPWAPPERYESRVFKYMDVYGGEPGPKSEEAWTNLIPKGKGWIKVHNETAIPDMPGLDQSLPEQSALVSVFHQLHCLYMTRAGYFAARSGNLDEVNVVHVSHCWDYLRQAIMCHSDTTLEWLHAPPDNFGSTGWGYEHQCRDYEAIFAFATEHRAGERQVIHG</sequence>
<gene>
    <name evidence="7" type="primary">phomYb</name>
</gene>
<comment type="function">
    <text evidence="5 6 10">UstYa family oxidase; part of the gene cluster that mediates the biosynthesis of the phomopsins, a group of hexapeptide mycotoxins which infects lupins and causes lupinosis disease in livestock (PubMed:26979951, PubMed:34608734). Within the pathway, phomYb is probably involved in the construction of the macrocyclic structure of the phomopsins (PubMed:34608734). The pathway starts with the processing of the precursor phomA by several endopeptidases including kexin proteases as well as the cluster-specific S41 family peptidase phomP1 and the oligopeptidase phomG to produce 10 identical copies of the hexapeptide Tyr-Val-Ile-Pro-Ile-Asp. After being excised from the precursor peptide, the core peptides are cyclized and modified post-translationally by enzymes encoded within the gene cluster. The timing and order of proteolysis of the phomA precursor and PTMs are still unknown. Two tyrosinase-like enzymes, phomQ1 and phomQ2, catalyze the chlorination and hydroxylation of Tyr, respectively. PhomYb, is proposed to be involved in the construction of the macrocyclic structure. The other 4 ustYa family proteins may be involved in PTMs that generate the unique structure of phomopsin A. PhomYa is required for the hydroxylation of C-beta of Tyr. PhomYc, phomYd, and phomYe are responsible for the biosynthesis of 2,3-dehydroisoleucine (dIle), 2,3-dehydroaspartic acid (dAsp), and 3,4-dehydroproline (dPro), respectively. While dIle formation by phomYc is indispensable for the installation of dAsp by phomYd, the order of the other PTMs have not been elucidated yet. Most of the biosynthetic enzymes likely have broad substrate specificity, and thus, there might be a metabolic grid from a precursor to phomopsin A. The enzyme(s) responsible for the biosynthesis of 3,4-dehydrovaline (dVal) have also not been identified yet. Finally, phomM acts as an S-adenosylmethionine-dependent alpha-N-methyltransferase that catalyzes two successive N-methylation reactions, converting N-desmethyl-phomopsin A to phomopsin A and phomopsin A further to an N,N-dimethylated congener called phomopsin E (Probable).</text>
</comment>
<comment type="pathway">
    <text evidence="6">Mycotoxin biosynthesis.</text>
</comment>
<comment type="subcellular location">
    <subcellularLocation>
        <location evidence="2">Membrane</location>
        <topology evidence="2">Single-pass membrane protein</topology>
    </subcellularLocation>
</comment>
<comment type="domain">
    <text evidence="1">The 2 HXXHC motifs are conserved in ustYa family proteins and might form active sites.</text>
</comment>
<comment type="disruption phenotype">
    <text evidence="6">Abolishes the formation of phomopsin A and related metabolites.</text>
</comment>
<comment type="similarity">
    <text evidence="9">Belongs to the ustYa family.</text>
</comment>
<proteinExistence type="inferred from homology"/>
<organism>
    <name type="scientific">Diaporthe leptostromiformis</name>
    <name type="common">Lupinosis disease fungus</name>
    <name type="synonym">Phomopsis leptostromiformis</name>
    <dbReference type="NCBI Taxonomy" id="291059"/>
    <lineage>
        <taxon>Eukaryota</taxon>
        <taxon>Fungi</taxon>
        <taxon>Dikarya</taxon>
        <taxon>Ascomycota</taxon>
        <taxon>Pezizomycotina</taxon>
        <taxon>Sordariomycetes</taxon>
        <taxon>Sordariomycetidae</taxon>
        <taxon>Diaporthales</taxon>
        <taxon>Diaporthaceae</taxon>
        <taxon>Diaporthe</taxon>
    </lineage>
</organism>
<name>PHOYB_DIALO</name>
<feature type="chain" id="PRO_0000458337" description="UstYa family oxidase phomYb">
    <location>
        <begin position="1"/>
        <end position="251"/>
    </location>
</feature>
<feature type="transmembrane region" description="Helical" evidence="2">
    <location>
        <begin position="58"/>
        <end position="78"/>
    </location>
</feature>
<feature type="region of interest" description="Disordered" evidence="4">
    <location>
        <begin position="1"/>
        <end position="47"/>
    </location>
</feature>
<feature type="short sequence motif" description="HXXHC 1" evidence="1">
    <location>
        <begin position="160"/>
        <end position="164"/>
    </location>
</feature>
<feature type="short sequence motif" description="HXXHC 2" evidence="1">
    <location>
        <begin position="187"/>
        <end position="191"/>
    </location>
</feature>
<feature type="glycosylation site" description="N-linked (GlcNAc...) asparagine" evidence="3">
    <location>
        <position position="135"/>
    </location>
</feature>